<sequence length="88" mass="9734">MLDTKFDELMDFPCAFPFKVVGDAHEALTDRVVAVVQKHAPGDYAPTTKASSKGSYYSITIRVTVTSKDHIETLYTELAAIEGVRRVL</sequence>
<evidence type="ECO:0000255" key="1">
    <source>
        <dbReference type="HAMAP-Rule" id="MF_00659"/>
    </source>
</evidence>
<proteinExistence type="inferred from homology"/>
<protein>
    <recommendedName>
        <fullName evidence="1">UPF0250 protein Sputcn32_2874</fullName>
    </recommendedName>
</protein>
<comment type="similarity">
    <text evidence="1">Belongs to the UPF0250 family.</text>
</comment>
<feature type="chain" id="PRO_1000061894" description="UPF0250 protein Sputcn32_2874">
    <location>
        <begin position="1"/>
        <end position="88"/>
    </location>
</feature>
<organism>
    <name type="scientific">Shewanella putrefaciens (strain CN-32 / ATCC BAA-453)</name>
    <dbReference type="NCBI Taxonomy" id="319224"/>
    <lineage>
        <taxon>Bacteria</taxon>
        <taxon>Pseudomonadati</taxon>
        <taxon>Pseudomonadota</taxon>
        <taxon>Gammaproteobacteria</taxon>
        <taxon>Alteromonadales</taxon>
        <taxon>Shewanellaceae</taxon>
        <taxon>Shewanella</taxon>
    </lineage>
</organism>
<gene>
    <name type="ordered locus">Sputcn32_2874</name>
</gene>
<reference key="1">
    <citation type="submission" date="2007-04" db="EMBL/GenBank/DDBJ databases">
        <title>Complete sequence of Shewanella putrefaciens CN-32.</title>
        <authorList>
            <consortium name="US DOE Joint Genome Institute"/>
            <person name="Copeland A."/>
            <person name="Lucas S."/>
            <person name="Lapidus A."/>
            <person name="Barry K."/>
            <person name="Detter J.C."/>
            <person name="Glavina del Rio T."/>
            <person name="Hammon N."/>
            <person name="Israni S."/>
            <person name="Dalin E."/>
            <person name="Tice H."/>
            <person name="Pitluck S."/>
            <person name="Chain P."/>
            <person name="Malfatti S."/>
            <person name="Shin M."/>
            <person name="Vergez L."/>
            <person name="Schmutz J."/>
            <person name="Larimer F."/>
            <person name="Land M."/>
            <person name="Hauser L."/>
            <person name="Kyrpides N."/>
            <person name="Mikhailova N."/>
            <person name="Romine M.F."/>
            <person name="Fredrickson J."/>
            <person name="Tiedje J."/>
            <person name="Richardson P."/>
        </authorList>
    </citation>
    <scope>NUCLEOTIDE SEQUENCE [LARGE SCALE GENOMIC DNA]</scope>
    <source>
        <strain>CN-32 / ATCC BAA-453</strain>
    </source>
</reference>
<dbReference type="EMBL" id="CP000681">
    <property type="protein sequence ID" value="ABP76593.1"/>
    <property type="molecule type" value="Genomic_DNA"/>
</dbReference>
<dbReference type="SMR" id="A4Y9G0"/>
<dbReference type="STRING" id="319224.Sputcn32_2874"/>
<dbReference type="KEGG" id="spc:Sputcn32_2874"/>
<dbReference type="eggNOG" id="COG2921">
    <property type="taxonomic scope" value="Bacteria"/>
</dbReference>
<dbReference type="HOGENOM" id="CLU_161438_2_1_6"/>
<dbReference type="GO" id="GO:0005829">
    <property type="term" value="C:cytosol"/>
    <property type="evidence" value="ECO:0007669"/>
    <property type="project" value="TreeGrafter"/>
</dbReference>
<dbReference type="Gene3D" id="3.30.70.260">
    <property type="match status" value="1"/>
</dbReference>
<dbReference type="HAMAP" id="MF_00659">
    <property type="entry name" value="UPF0250"/>
    <property type="match status" value="1"/>
</dbReference>
<dbReference type="InterPro" id="IPR007454">
    <property type="entry name" value="UPF0250_YbeD-like"/>
</dbReference>
<dbReference type="InterPro" id="IPR027471">
    <property type="entry name" value="YbeD-like_sf"/>
</dbReference>
<dbReference type="NCBIfam" id="NF003447">
    <property type="entry name" value="PRK04998.1"/>
    <property type="match status" value="1"/>
</dbReference>
<dbReference type="PANTHER" id="PTHR38036">
    <property type="entry name" value="UPF0250 PROTEIN YBED"/>
    <property type="match status" value="1"/>
</dbReference>
<dbReference type="PANTHER" id="PTHR38036:SF1">
    <property type="entry name" value="UPF0250 PROTEIN YBED"/>
    <property type="match status" value="1"/>
</dbReference>
<dbReference type="Pfam" id="PF04359">
    <property type="entry name" value="DUF493"/>
    <property type="match status" value="1"/>
</dbReference>
<dbReference type="SUPFAM" id="SSF117991">
    <property type="entry name" value="YbeD/HP0495-like"/>
    <property type="match status" value="1"/>
</dbReference>
<accession>A4Y9G0</accession>
<name>Y2874_SHEPC</name>